<evidence type="ECO:0000255" key="1">
    <source>
        <dbReference type="HAMAP-Rule" id="MF_01885"/>
    </source>
</evidence>
<evidence type="ECO:0000305" key="2"/>
<comment type="function">
    <text evidence="1">Methylates the ribose at the nucleotide 34 wobble position in the two leucyl isoacceptors tRNA(Leu)(CmAA) and tRNA(Leu)(cmnm5UmAA). Catalyzes the methyl transfer from S-adenosyl-L-methionine to the 2'-OH of the wobble nucleotide.</text>
</comment>
<comment type="catalytic activity">
    <reaction evidence="1">
        <text>cytidine(34) in tRNA + S-adenosyl-L-methionine = 2'-O-methylcytidine(34) in tRNA + S-adenosyl-L-homocysteine + H(+)</text>
        <dbReference type="Rhea" id="RHEA:43084"/>
        <dbReference type="Rhea" id="RHEA-COMP:10331"/>
        <dbReference type="Rhea" id="RHEA-COMP:10332"/>
        <dbReference type="ChEBI" id="CHEBI:15378"/>
        <dbReference type="ChEBI" id="CHEBI:57856"/>
        <dbReference type="ChEBI" id="CHEBI:59789"/>
        <dbReference type="ChEBI" id="CHEBI:74495"/>
        <dbReference type="ChEBI" id="CHEBI:82748"/>
        <dbReference type="EC" id="2.1.1.207"/>
    </reaction>
</comment>
<comment type="catalytic activity">
    <reaction evidence="1">
        <text>5-carboxymethylaminomethyluridine(34) in tRNA(Leu) + S-adenosyl-L-methionine = 5-carboxymethylaminomethyl-2'-O-methyluridine(34) in tRNA(Leu) + S-adenosyl-L-homocysteine + H(+)</text>
        <dbReference type="Rhea" id="RHEA:43088"/>
        <dbReference type="Rhea" id="RHEA-COMP:10333"/>
        <dbReference type="Rhea" id="RHEA-COMP:10334"/>
        <dbReference type="ChEBI" id="CHEBI:15378"/>
        <dbReference type="ChEBI" id="CHEBI:57856"/>
        <dbReference type="ChEBI" id="CHEBI:59789"/>
        <dbReference type="ChEBI" id="CHEBI:74508"/>
        <dbReference type="ChEBI" id="CHEBI:74511"/>
        <dbReference type="EC" id="2.1.1.207"/>
    </reaction>
</comment>
<comment type="subunit">
    <text evidence="1">Homodimer.</text>
</comment>
<comment type="subcellular location">
    <subcellularLocation>
        <location evidence="1">Cytoplasm</location>
    </subcellularLocation>
</comment>
<comment type="similarity">
    <text evidence="1">Belongs to the class IV-like SAM-binding methyltransferase superfamily. RNA methyltransferase TrmH family. TrmL subfamily.</text>
</comment>
<comment type="sequence caution" evidence="2">
    <conflict type="erroneous initiation">
        <sequence resource="EMBL-CDS" id="ABI88462"/>
    </conflict>
    <text>Extended N-terminus.</text>
</comment>
<keyword id="KW-0963">Cytoplasm</keyword>
<keyword id="KW-0489">Methyltransferase</keyword>
<keyword id="KW-0949">S-adenosyl-L-methionine</keyword>
<keyword id="KW-0808">Transferase</keyword>
<keyword id="KW-0819">tRNA processing</keyword>
<name>TRML_BURCM</name>
<gene>
    <name evidence="1" type="primary">trmL</name>
    <name type="ordered locus">Bamb_2906</name>
</gene>
<feature type="chain" id="PRO_0000401943" description="tRNA (cytidine(34)-2'-O)-methyltransferase">
    <location>
        <begin position="1"/>
        <end position="156"/>
    </location>
</feature>
<feature type="binding site" evidence="1">
    <location>
        <position position="102"/>
    </location>
    <ligand>
        <name>S-adenosyl-L-methionine</name>
        <dbReference type="ChEBI" id="CHEBI:59789"/>
    </ligand>
</feature>
<feature type="binding site" evidence="1">
    <location>
        <position position="124"/>
    </location>
    <ligand>
        <name>S-adenosyl-L-methionine</name>
        <dbReference type="ChEBI" id="CHEBI:59789"/>
    </ligand>
</feature>
<feature type="binding site" evidence="1">
    <location>
        <position position="132"/>
    </location>
    <ligand>
        <name>S-adenosyl-L-methionine</name>
        <dbReference type="ChEBI" id="CHEBI:59789"/>
    </ligand>
</feature>
<dbReference type="EC" id="2.1.1.207" evidence="1"/>
<dbReference type="EMBL" id="CP000440">
    <property type="protein sequence ID" value="ABI88462.1"/>
    <property type="status" value="ALT_INIT"/>
    <property type="molecule type" value="Genomic_DNA"/>
</dbReference>
<dbReference type="RefSeq" id="WP_006752065.1">
    <property type="nucleotide sequence ID" value="NZ_CP009798.1"/>
</dbReference>
<dbReference type="SMR" id="Q0BBL1"/>
<dbReference type="GeneID" id="93084892"/>
<dbReference type="KEGG" id="bam:Bamb_2906"/>
<dbReference type="PATRIC" id="fig|339670.21.peg.1974"/>
<dbReference type="eggNOG" id="COG0219">
    <property type="taxonomic scope" value="Bacteria"/>
</dbReference>
<dbReference type="Proteomes" id="UP000000662">
    <property type="component" value="Chromosome 1"/>
</dbReference>
<dbReference type="GO" id="GO:0005737">
    <property type="term" value="C:cytoplasm"/>
    <property type="evidence" value="ECO:0007669"/>
    <property type="project" value="UniProtKB-SubCell"/>
</dbReference>
<dbReference type="GO" id="GO:0003723">
    <property type="term" value="F:RNA binding"/>
    <property type="evidence" value="ECO:0007669"/>
    <property type="project" value="InterPro"/>
</dbReference>
<dbReference type="GO" id="GO:0141102">
    <property type="term" value="F:tRNA (5-carboxymethylaminomethyluridine(34)-2'-O)-methyltransferase activity"/>
    <property type="evidence" value="ECO:0007669"/>
    <property type="project" value="RHEA"/>
</dbReference>
<dbReference type="GO" id="GO:0141098">
    <property type="term" value="F:tRNA (cytidine(34)-2'-O)-methyltransferase activity"/>
    <property type="evidence" value="ECO:0007669"/>
    <property type="project" value="RHEA"/>
</dbReference>
<dbReference type="GO" id="GO:0002131">
    <property type="term" value="P:wobble position cytosine ribose methylation"/>
    <property type="evidence" value="ECO:0007669"/>
    <property type="project" value="TreeGrafter"/>
</dbReference>
<dbReference type="GO" id="GO:0002132">
    <property type="term" value="P:wobble position uridine ribose methylation"/>
    <property type="evidence" value="ECO:0007669"/>
    <property type="project" value="TreeGrafter"/>
</dbReference>
<dbReference type="CDD" id="cd18094">
    <property type="entry name" value="SpoU-like_TrmL"/>
    <property type="match status" value="1"/>
</dbReference>
<dbReference type="FunFam" id="3.40.1280.10:FF:000002">
    <property type="entry name" value="Peptidylprolyl isomerase"/>
    <property type="match status" value="1"/>
</dbReference>
<dbReference type="Gene3D" id="3.40.1280.10">
    <property type="match status" value="1"/>
</dbReference>
<dbReference type="HAMAP" id="MF_01885">
    <property type="entry name" value="tRNA_methyltr_TrmL"/>
    <property type="match status" value="1"/>
</dbReference>
<dbReference type="InterPro" id="IPR029028">
    <property type="entry name" value="Alpha/beta_knot_MTases"/>
</dbReference>
<dbReference type="InterPro" id="IPR001537">
    <property type="entry name" value="SpoU_MeTrfase"/>
</dbReference>
<dbReference type="InterPro" id="IPR016914">
    <property type="entry name" value="TrmL"/>
</dbReference>
<dbReference type="InterPro" id="IPR029026">
    <property type="entry name" value="tRNA_m1G_MTases_N"/>
</dbReference>
<dbReference type="NCBIfam" id="TIGR00185">
    <property type="entry name" value="tRNA_yibK_trmL"/>
    <property type="match status" value="1"/>
</dbReference>
<dbReference type="PANTHER" id="PTHR42971">
    <property type="entry name" value="TRNA (CYTIDINE(34)-2'-O)-METHYLTRANSFERASE"/>
    <property type="match status" value="1"/>
</dbReference>
<dbReference type="PANTHER" id="PTHR42971:SF1">
    <property type="entry name" value="TRNA (CYTIDINE(34)-2'-O)-METHYLTRANSFERASE"/>
    <property type="match status" value="1"/>
</dbReference>
<dbReference type="Pfam" id="PF00588">
    <property type="entry name" value="SpoU_methylase"/>
    <property type="match status" value="1"/>
</dbReference>
<dbReference type="PIRSF" id="PIRSF029256">
    <property type="entry name" value="SpoU_TrmH_prd"/>
    <property type="match status" value="1"/>
</dbReference>
<dbReference type="SUPFAM" id="SSF75217">
    <property type="entry name" value="alpha/beta knot"/>
    <property type="match status" value="1"/>
</dbReference>
<organism>
    <name type="scientific">Burkholderia ambifaria (strain ATCC BAA-244 / DSM 16087 / CCUG 44356 / LMG 19182 / AMMD)</name>
    <name type="common">Burkholderia cepacia (strain AMMD)</name>
    <dbReference type="NCBI Taxonomy" id="339670"/>
    <lineage>
        <taxon>Bacteria</taxon>
        <taxon>Pseudomonadati</taxon>
        <taxon>Pseudomonadota</taxon>
        <taxon>Betaproteobacteria</taxon>
        <taxon>Burkholderiales</taxon>
        <taxon>Burkholderiaceae</taxon>
        <taxon>Burkholderia</taxon>
        <taxon>Burkholderia cepacia complex</taxon>
    </lineage>
</organism>
<sequence length="156" mass="17478">MFNVILVAPEIPPNTGNVIRLCANTGARLHLIEPLGFPLDDAKMRRAGLDYHEYAEMRVHRDWDAFVAAEAPDPARMFAFTTRGSGRFHDHAFVPGDWFVFGSETRGLPADVLERFPNEQRVRLPMRPGNRSLNLSNTVAVVVFEAWRQAGFEGGA</sequence>
<reference key="1">
    <citation type="submission" date="2006-08" db="EMBL/GenBank/DDBJ databases">
        <title>Complete sequence of chromosome 1 of Burkholderia cepacia AMMD.</title>
        <authorList>
            <person name="Copeland A."/>
            <person name="Lucas S."/>
            <person name="Lapidus A."/>
            <person name="Barry K."/>
            <person name="Detter J.C."/>
            <person name="Glavina del Rio T."/>
            <person name="Hammon N."/>
            <person name="Israni S."/>
            <person name="Pitluck S."/>
            <person name="Bruce D."/>
            <person name="Chain P."/>
            <person name="Malfatti S."/>
            <person name="Shin M."/>
            <person name="Vergez L."/>
            <person name="Schmutz J."/>
            <person name="Larimer F."/>
            <person name="Land M."/>
            <person name="Hauser L."/>
            <person name="Kyrpides N."/>
            <person name="Kim E."/>
            <person name="Parke J."/>
            <person name="Coenye T."/>
            <person name="Konstantinidis K."/>
            <person name="Ramette A."/>
            <person name="Tiedje J."/>
            <person name="Richardson P."/>
        </authorList>
    </citation>
    <scope>NUCLEOTIDE SEQUENCE [LARGE SCALE GENOMIC DNA]</scope>
    <source>
        <strain>ATCC BAA-244 / DSM 16087 / CCUG 44356 / LMG 19182 / AMMD</strain>
    </source>
</reference>
<protein>
    <recommendedName>
        <fullName evidence="1">tRNA (cytidine(34)-2'-O)-methyltransferase</fullName>
        <ecNumber evidence="1">2.1.1.207</ecNumber>
    </recommendedName>
    <alternativeName>
        <fullName evidence="1">tRNA (cytidine/uridine-2'-O-)-methyltransferase TrmL</fullName>
    </alternativeName>
</protein>
<accession>Q0BBL1</accession>
<proteinExistence type="inferred from homology"/>